<protein>
    <recommendedName>
        <fullName evidence="1">Holo-[acyl-carrier-protein] synthase</fullName>
        <shortName evidence="1">Holo-ACP synthase</shortName>
        <ecNumber evidence="1">2.7.8.7</ecNumber>
    </recommendedName>
    <alternativeName>
        <fullName evidence="1">4'-phosphopantetheinyl transferase AcpS</fullName>
    </alternativeName>
</protein>
<proteinExistence type="inferred from homology"/>
<comment type="function">
    <text evidence="1">Transfers the 4'-phosphopantetheine moiety from coenzyme A to a Ser of acyl-carrier-protein.</text>
</comment>
<comment type="catalytic activity">
    <reaction evidence="1">
        <text>apo-[ACP] + CoA = holo-[ACP] + adenosine 3',5'-bisphosphate + H(+)</text>
        <dbReference type="Rhea" id="RHEA:12068"/>
        <dbReference type="Rhea" id="RHEA-COMP:9685"/>
        <dbReference type="Rhea" id="RHEA-COMP:9690"/>
        <dbReference type="ChEBI" id="CHEBI:15378"/>
        <dbReference type="ChEBI" id="CHEBI:29999"/>
        <dbReference type="ChEBI" id="CHEBI:57287"/>
        <dbReference type="ChEBI" id="CHEBI:58343"/>
        <dbReference type="ChEBI" id="CHEBI:64479"/>
        <dbReference type="EC" id="2.7.8.7"/>
    </reaction>
</comment>
<comment type="cofactor">
    <cofactor evidence="1">
        <name>Mg(2+)</name>
        <dbReference type="ChEBI" id="CHEBI:18420"/>
    </cofactor>
</comment>
<comment type="subcellular location">
    <subcellularLocation>
        <location evidence="1">Cytoplasm</location>
    </subcellularLocation>
</comment>
<comment type="similarity">
    <text evidence="1">Belongs to the P-Pant transferase superfamily. AcpS family.</text>
</comment>
<sequence length="134" mass="14645">MIVGIGSDLIDIRRVEKTLERHGSRFRDRVFTEIEQRKSEGRKQRAASYAKRFAAKEACAKALGTGIAEGVFWRDMGVVNTPSGKPTMHLTGGAAKQLQKLLPAGTNAAIHLTITDDFPLAQAFVIIEALPVLE</sequence>
<evidence type="ECO:0000255" key="1">
    <source>
        <dbReference type="HAMAP-Rule" id="MF_00101"/>
    </source>
</evidence>
<organism>
    <name type="scientific">Brucella suis biovar 1 (strain 1330)</name>
    <dbReference type="NCBI Taxonomy" id="204722"/>
    <lineage>
        <taxon>Bacteria</taxon>
        <taxon>Pseudomonadati</taxon>
        <taxon>Pseudomonadota</taxon>
        <taxon>Alphaproteobacteria</taxon>
        <taxon>Hyphomicrobiales</taxon>
        <taxon>Brucellaceae</taxon>
        <taxon>Brucella/Ochrobactrum group</taxon>
        <taxon>Brucella</taxon>
    </lineage>
</organism>
<reference key="1">
    <citation type="journal article" date="2002" name="Proc. Natl. Acad. Sci. U.S.A.">
        <title>The Brucella suis genome reveals fundamental similarities between animal and plant pathogens and symbionts.</title>
        <authorList>
            <person name="Paulsen I.T."/>
            <person name="Seshadri R."/>
            <person name="Nelson K.E."/>
            <person name="Eisen J.A."/>
            <person name="Heidelberg J.F."/>
            <person name="Read T.D."/>
            <person name="Dodson R.J."/>
            <person name="Umayam L.A."/>
            <person name="Brinkac L.M."/>
            <person name="Beanan M.J."/>
            <person name="Daugherty S.C."/>
            <person name="DeBoy R.T."/>
            <person name="Durkin A.S."/>
            <person name="Kolonay J.F."/>
            <person name="Madupu R."/>
            <person name="Nelson W.C."/>
            <person name="Ayodeji B."/>
            <person name="Kraul M."/>
            <person name="Shetty J."/>
            <person name="Malek J.A."/>
            <person name="Van Aken S.E."/>
            <person name="Riedmuller S."/>
            <person name="Tettelin H."/>
            <person name="Gill S.R."/>
            <person name="White O."/>
            <person name="Salzberg S.L."/>
            <person name="Hoover D.L."/>
            <person name="Lindler L.E."/>
            <person name="Halling S.M."/>
            <person name="Boyle S.M."/>
            <person name="Fraser C.M."/>
        </authorList>
    </citation>
    <scope>NUCLEOTIDE SEQUENCE [LARGE SCALE GENOMIC DNA]</scope>
    <source>
        <strain>1330</strain>
    </source>
</reference>
<reference key="2">
    <citation type="journal article" date="2011" name="J. Bacteriol.">
        <title>Revised genome sequence of Brucella suis 1330.</title>
        <authorList>
            <person name="Tae H."/>
            <person name="Shallom S."/>
            <person name="Settlage R."/>
            <person name="Preston D."/>
            <person name="Adams L.G."/>
            <person name="Garner H.R."/>
        </authorList>
    </citation>
    <scope>NUCLEOTIDE SEQUENCE [LARGE SCALE GENOMIC DNA]</scope>
    <source>
        <strain>1330</strain>
    </source>
</reference>
<name>ACPS_BRUSU</name>
<keyword id="KW-0963">Cytoplasm</keyword>
<keyword id="KW-0275">Fatty acid biosynthesis</keyword>
<keyword id="KW-0276">Fatty acid metabolism</keyword>
<keyword id="KW-0444">Lipid biosynthesis</keyword>
<keyword id="KW-0443">Lipid metabolism</keyword>
<keyword id="KW-0460">Magnesium</keyword>
<keyword id="KW-0479">Metal-binding</keyword>
<keyword id="KW-0808">Transferase</keyword>
<feature type="chain" id="PRO_0000175620" description="Holo-[acyl-carrier-protein] synthase">
    <location>
        <begin position="1"/>
        <end position="134"/>
    </location>
</feature>
<feature type="binding site" evidence="1">
    <location>
        <position position="8"/>
    </location>
    <ligand>
        <name>Mg(2+)</name>
        <dbReference type="ChEBI" id="CHEBI:18420"/>
    </ligand>
</feature>
<feature type="binding site" evidence="1">
    <location>
        <position position="57"/>
    </location>
    <ligand>
        <name>Mg(2+)</name>
        <dbReference type="ChEBI" id="CHEBI:18420"/>
    </ligand>
</feature>
<dbReference type="EC" id="2.7.8.7" evidence="1"/>
<dbReference type="EMBL" id="AE014291">
    <property type="protein sequence ID" value="AAN29588.1"/>
    <property type="molecule type" value="Genomic_DNA"/>
</dbReference>
<dbReference type="EMBL" id="CP002997">
    <property type="protein sequence ID" value="AEM18005.1"/>
    <property type="molecule type" value="Genomic_DNA"/>
</dbReference>
<dbReference type="RefSeq" id="WP_002963803.1">
    <property type="nucleotide sequence ID" value="NZ_KN046804.1"/>
</dbReference>
<dbReference type="SMR" id="P63465"/>
<dbReference type="GeneID" id="97534013"/>
<dbReference type="KEGG" id="bms:BR0659"/>
<dbReference type="KEGG" id="bsi:BS1330_I0655"/>
<dbReference type="PATRIC" id="fig|204722.21.peg.1518"/>
<dbReference type="HOGENOM" id="CLU_089696_0_2_5"/>
<dbReference type="PhylomeDB" id="P63465"/>
<dbReference type="Proteomes" id="UP000007104">
    <property type="component" value="Chromosome I"/>
</dbReference>
<dbReference type="GO" id="GO:0005737">
    <property type="term" value="C:cytoplasm"/>
    <property type="evidence" value="ECO:0007669"/>
    <property type="project" value="UniProtKB-SubCell"/>
</dbReference>
<dbReference type="GO" id="GO:0008897">
    <property type="term" value="F:holo-[acyl-carrier-protein] synthase activity"/>
    <property type="evidence" value="ECO:0007669"/>
    <property type="project" value="UniProtKB-UniRule"/>
</dbReference>
<dbReference type="GO" id="GO:0000287">
    <property type="term" value="F:magnesium ion binding"/>
    <property type="evidence" value="ECO:0007669"/>
    <property type="project" value="UniProtKB-UniRule"/>
</dbReference>
<dbReference type="GO" id="GO:0006633">
    <property type="term" value="P:fatty acid biosynthetic process"/>
    <property type="evidence" value="ECO:0007669"/>
    <property type="project" value="UniProtKB-UniRule"/>
</dbReference>
<dbReference type="Gene3D" id="3.90.470.20">
    <property type="entry name" value="4'-phosphopantetheinyl transferase domain"/>
    <property type="match status" value="1"/>
</dbReference>
<dbReference type="HAMAP" id="MF_00101">
    <property type="entry name" value="AcpS"/>
    <property type="match status" value="1"/>
</dbReference>
<dbReference type="InterPro" id="IPR008278">
    <property type="entry name" value="4-PPantetheinyl_Trfase_dom"/>
</dbReference>
<dbReference type="InterPro" id="IPR037143">
    <property type="entry name" value="4-PPantetheinyl_Trfase_dom_sf"/>
</dbReference>
<dbReference type="InterPro" id="IPR002582">
    <property type="entry name" value="ACPS"/>
</dbReference>
<dbReference type="InterPro" id="IPR004568">
    <property type="entry name" value="Ppantetheine-prot_Trfase_dom"/>
</dbReference>
<dbReference type="NCBIfam" id="TIGR00516">
    <property type="entry name" value="acpS"/>
    <property type="match status" value="1"/>
</dbReference>
<dbReference type="NCBIfam" id="TIGR00556">
    <property type="entry name" value="pantethn_trn"/>
    <property type="match status" value="1"/>
</dbReference>
<dbReference type="Pfam" id="PF01648">
    <property type="entry name" value="ACPS"/>
    <property type="match status" value="1"/>
</dbReference>
<dbReference type="SUPFAM" id="SSF56214">
    <property type="entry name" value="4'-phosphopantetheinyl transferase"/>
    <property type="match status" value="1"/>
</dbReference>
<gene>
    <name evidence="1" type="primary">acpS</name>
    <name type="ordered locus">BR0659</name>
    <name type="ordered locus">BS1330_I0655</name>
</gene>
<accession>P63465</accession>
<accession>G0K800</accession>
<accession>Q8YG72</accession>